<reference key="1">
    <citation type="submission" date="2009-04" db="EMBL/GenBank/DDBJ databases">
        <title>Genome sequence of Bacillus anthracis A0248.</title>
        <authorList>
            <person name="Dodson R.J."/>
            <person name="Munk A.C."/>
            <person name="Bruce D."/>
            <person name="Detter C."/>
            <person name="Tapia R."/>
            <person name="Sutton G."/>
            <person name="Sims D."/>
            <person name="Brettin T."/>
        </authorList>
    </citation>
    <scope>NUCLEOTIDE SEQUENCE [LARGE SCALE GENOMIC DNA]</scope>
    <source>
        <strain>A0248</strain>
    </source>
</reference>
<name>ISPG_BACAA</name>
<sequence length="370" mass="40027">MNEMTHRTKTRPVKVGNLTIGGNNELIIQSMTTTKTHDVEATVAEIKRLEEAGCQVVRVAVPDERAANAIADIKKQINIPLVADIHFDYRLALKAIEGGIDKVRINPGNIGRRHKVEAVVNAAKERGIPIRIGVNAGSLERHILEKYGYPTADGMVESALHHIKILEDLDFHDIIVSMKASDVNLAIEAYEKAARAFDYPLHLGITESGTLFAGTVKSAAGLGAILNKGIGNTLRISLSADPVEEVKVARELLKSFGLASNAATLISCPTCGRIEIDLISIANEVEEYISTLQVPIKVAVLGCAVNGPGEAREADIGIAGARGEGLLFRKGQVVRKVPEEIMVEELKKEIDVIAAEMAAEREKEKETQEQ</sequence>
<organism>
    <name type="scientific">Bacillus anthracis (strain A0248)</name>
    <dbReference type="NCBI Taxonomy" id="592021"/>
    <lineage>
        <taxon>Bacteria</taxon>
        <taxon>Bacillati</taxon>
        <taxon>Bacillota</taxon>
        <taxon>Bacilli</taxon>
        <taxon>Bacillales</taxon>
        <taxon>Bacillaceae</taxon>
        <taxon>Bacillus</taxon>
        <taxon>Bacillus cereus group</taxon>
    </lineage>
</organism>
<accession>C3P8I5</accession>
<gene>
    <name evidence="1" type="primary">ispG</name>
    <name type="ordered locus">BAA_4522</name>
</gene>
<keyword id="KW-0004">4Fe-4S</keyword>
<keyword id="KW-0408">Iron</keyword>
<keyword id="KW-0411">Iron-sulfur</keyword>
<keyword id="KW-0414">Isoprene biosynthesis</keyword>
<keyword id="KW-0479">Metal-binding</keyword>
<keyword id="KW-0560">Oxidoreductase</keyword>
<protein>
    <recommendedName>
        <fullName evidence="1">4-hydroxy-3-methylbut-2-en-1-yl diphosphate synthase (flavodoxin)</fullName>
        <ecNumber evidence="1">1.17.7.3</ecNumber>
    </recommendedName>
    <alternativeName>
        <fullName evidence="1">1-hydroxy-2-methyl-2-(E)-butenyl 4-diphosphate synthase</fullName>
    </alternativeName>
</protein>
<evidence type="ECO:0000255" key="1">
    <source>
        <dbReference type="HAMAP-Rule" id="MF_00159"/>
    </source>
</evidence>
<feature type="chain" id="PRO_1000123431" description="4-hydroxy-3-methylbut-2-en-1-yl diphosphate synthase (flavodoxin)">
    <location>
        <begin position="1"/>
        <end position="370"/>
    </location>
</feature>
<feature type="binding site" evidence="1">
    <location>
        <position position="268"/>
    </location>
    <ligand>
        <name>[4Fe-4S] cluster</name>
        <dbReference type="ChEBI" id="CHEBI:49883"/>
    </ligand>
</feature>
<feature type="binding site" evidence="1">
    <location>
        <position position="271"/>
    </location>
    <ligand>
        <name>[4Fe-4S] cluster</name>
        <dbReference type="ChEBI" id="CHEBI:49883"/>
    </ligand>
</feature>
<feature type="binding site" evidence="1">
    <location>
        <position position="303"/>
    </location>
    <ligand>
        <name>[4Fe-4S] cluster</name>
        <dbReference type="ChEBI" id="CHEBI:49883"/>
    </ligand>
</feature>
<feature type="binding site" evidence="1">
    <location>
        <position position="310"/>
    </location>
    <ligand>
        <name>[4Fe-4S] cluster</name>
        <dbReference type="ChEBI" id="CHEBI:49883"/>
    </ligand>
</feature>
<dbReference type="EC" id="1.17.7.3" evidence="1"/>
<dbReference type="EMBL" id="CP001598">
    <property type="protein sequence ID" value="ACQ50959.1"/>
    <property type="molecule type" value="Genomic_DNA"/>
</dbReference>
<dbReference type="SMR" id="C3P8I5"/>
<dbReference type="KEGG" id="bai:BAA_4522"/>
<dbReference type="HOGENOM" id="CLU_042258_0_0_9"/>
<dbReference type="UniPathway" id="UPA00056">
    <property type="reaction ID" value="UER00096"/>
</dbReference>
<dbReference type="GO" id="GO:0051539">
    <property type="term" value="F:4 iron, 4 sulfur cluster binding"/>
    <property type="evidence" value="ECO:0007669"/>
    <property type="project" value="UniProtKB-UniRule"/>
</dbReference>
<dbReference type="GO" id="GO:0046429">
    <property type="term" value="F:4-hydroxy-3-methylbut-2-en-1-yl diphosphate synthase activity (ferredoxin)"/>
    <property type="evidence" value="ECO:0007669"/>
    <property type="project" value="UniProtKB-UniRule"/>
</dbReference>
<dbReference type="GO" id="GO:0141197">
    <property type="term" value="F:4-hydroxy-3-methylbut-2-enyl-diphosphate synthase activity (flavodoxin)"/>
    <property type="evidence" value="ECO:0007669"/>
    <property type="project" value="UniProtKB-EC"/>
</dbReference>
<dbReference type="GO" id="GO:0005506">
    <property type="term" value="F:iron ion binding"/>
    <property type="evidence" value="ECO:0007669"/>
    <property type="project" value="InterPro"/>
</dbReference>
<dbReference type="GO" id="GO:0019288">
    <property type="term" value="P:isopentenyl diphosphate biosynthetic process, methylerythritol 4-phosphate pathway"/>
    <property type="evidence" value="ECO:0007669"/>
    <property type="project" value="UniProtKB-UniRule"/>
</dbReference>
<dbReference type="GO" id="GO:0016114">
    <property type="term" value="P:terpenoid biosynthetic process"/>
    <property type="evidence" value="ECO:0007669"/>
    <property type="project" value="InterPro"/>
</dbReference>
<dbReference type="FunFam" id="3.20.20.20:FF:000001">
    <property type="entry name" value="4-hydroxy-3-methylbut-2-en-1-yl diphosphate synthase (flavodoxin)"/>
    <property type="match status" value="1"/>
</dbReference>
<dbReference type="FunFam" id="3.30.413.10:FF:000005">
    <property type="entry name" value="4-hydroxy-3-methylbut-2-en-1-yl diphosphate synthase (flavodoxin)"/>
    <property type="match status" value="1"/>
</dbReference>
<dbReference type="Gene3D" id="3.20.20.20">
    <property type="entry name" value="Dihydropteroate synthase-like"/>
    <property type="match status" value="1"/>
</dbReference>
<dbReference type="Gene3D" id="3.30.413.10">
    <property type="entry name" value="Sulfite Reductase Hemoprotein, domain 1"/>
    <property type="match status" value="1"/>
</dbReference>
<dbReference type="HAMAP" id="MF_00159">
    <property type="entry name" value="IspG"/>
    <property type="match status" value="1"/>
</dbReference>
<dbReference type="InterPro" id="IPR011005">
    <property type="entry name" value="Dihydropteroate_synth-like_sf"/>
</dbReference>
<dbReference type="InterPro" id="IPR016425">
    <property type="entry name" value="IspG_bac"/>
</dbReference>
<dbReference type="InterPro" id="IPR004588">
    <property type="entry name" value="IspG_bac-typ"/>
</dbReference>
<dbReference type="InterPro" id="IPR045854">
    <property type="entry name" value="NO2/SO3_Rdtase_4Fe4S_sf"/>
</dbReference>
<dbReference type="NCBIfam" id="TIGR00612">
    <property type="entry name" value="ispG_gcpE"/>
    <property type="match status" value="1"/>
</dbReference>
<dbReference type="NCBIfam" id="NF001540">
    <property type="entry name" value="PRK00366.1"/>
    <property type="match status" value="1"/>
</dbReference>
<dbReference type="PANTHER" id="PTHR30454">
    <property type="entry name" value="4-HYDROXY-3-METHYLBUT-2-EN-1-YL DIPHOSPHATE SYNTHASE"/>
    <property type="match status" value="1"/>
</dbReference>
<dbReference type="PANTHER" id="PTHR30454:SF0">
    <property type="entry name" value="4-HYDROXY-3-METHYLBUT-2-EN-1-YL DIPHOSPHATE SYNTHASE (FERREDOXIN), CHLOROPLASTIC"/>
    <property type="match status" value="1"/>
</dbReference>
<dbReference type="Pfam" id="PF04551">
    <property type="entry name" value="GcpE"/>
    <property type="match status" value="1"/>
</dbReference>
<dbReference type="PIRSF" id="PIRSF004640">
    <property type="entry name" value="IspG"/>
    <property type="match status" value="1"/>
</dbReference>
<dbReference type="SUPFAM" id="SSF51717">
    <property type="entry name" value="Dihydropteroate synthetase-like"/>
    <property type="match status" value="1"/>
</dbReference>
<dbReference type="SUPFAM" id="SSF56014">
    <property type="entry name" value="Nitrite and sulphite reductase 4Fe-4S domain-like"/>
    <property type="match status" value="1"/>
</dbReference>
<proteinExistence type="inferred from homology"/>
<comment type="function">
    <text evidence="1">Converts 2C-methyl-D-erythritol 2,4-cyclodiphosphate (ME-2,4cPP) into 1-hydroxy-2-methyl-2-(E)-butenyl 4-diphosphate.</text>
</comment>
<comment type="catalytic activity">
    <reaction evidence="1">
        <text>(2E)-4-hydroxy-3-methylbut-2-enyl diphosphate + oxidized [flavodoxin] + H2O + 2 H(+) = 2-C-methyl-D-erythritol 2,4-cyclic diphosphate + reduced [flavodoxin]</text>
        <dbReference type="Rhea" id="RHEA:43604"/>
        <dbReference type="Rhea" id="RHEA-COMP:10622"/>
        <dbReference type="Rhea" id="RHEA-COMP:10623"/>
        <dbReference type="ChEBI" id="CHEBI:15377"/>
        <dbReference type="ChEBI" id="CHEBI:15378"/>
        <dbReference type="ChEBI" id="CHEBI:57618"/>
        <dbReference type="ChEBI" id="CHEBI:58210"/>
        <dbReference type="ChEBI" id="CHEBI:58483"/>
        <dbReference type="ChEBI" id="CHEBI:128753"/>
        <dbReference type="EC" id="1.17.7.3"/>
    </reaction>
</comment>
<comment type="cofactor">
    <cofactor evidence="1">
        <name>[4Fe-4S] cluster</name>
        <dbReference type="ChEBI" id="CHEBI:49883"/>
    </cofactor>
    <text evidence="1">Binds 1 [4Fe-4S] cluster.</text>
</comment>
<comment type="pathway">
    <text evidence="1">Isoprenoid biosynthesis; isopentenyl diphosphate biosynthesis via DXP pathway; isopentenyl diphosphate from 1-deoxy-D-xylulose 5-phosphate: step 5/6.</text>
</comment>
<comment type="similarity">
    <text evidence="1">Belongs to the IspG family.</text>
</comment>